<organism>
    <name type="scientific">Drosophila melanogaster</name>
    <name type="common">Fruit fly</name>
    <dbReference type="NCBI Taxonomy" id="7227"/>
    <lineage>
        <taxon>Eukaryota</taxon>
        <taxon>Metazoa</taxon>
        <taxon>Ecdysozoa</taxon>
        <taxon>Arthropoda</taxon>
        <taxon>Hexapoda</taxon>
        <taxon>Insecta</taxon>
        <taxon>Pterygota</taxon>
        <taxon>Neoptera</taxon>
        <taxon>Endopterygota</taxon>
        <taxon>Diptera</taxon>
        <taxon>Brachycera</taxon>
        <taxon>Muscomorpha</taxon>
        <taxon>Ephydroidea</taxon>
        <taxon>Drosophilidae</taxon>
        <taxon>Drosophila</taxon>
        <taxon>Sophophora</taxon>
    </lineage>
</organism>
<protein>
    <recommendedName>
        <fullName>Protein lap4</fullName>
    </recommendedName>
    <alternativeName>
        <fullName>Protein scribble</fullName>
    </alternativeName>
    <alternativeName>
        <fullName>Protein smell-impaired</fullName>
    </alternativeName>
</protein>
<gene>
    <name evidence="18" type="primary">scrib</name>
    <name evidence="14" type="synonym">smi</name>
    <name evidence="23" type="synonym">vart</name>
    <name type="ORF">CG5462</name>
</gene>
<reference evidence="16 17" key="1">
    <citation type="journal article" date="2000" name="Nature">
        <title>Localization of apical epithelial determinants by the basolateral PDZ protein Scribble.</title>
        <authorList>
            <person name="Bilder D."/>
            <person name="Perrimon N."/>
        </authorList>
    </citation>
    <scope>NUCLEOTIDE SEQUENCE [MRNA] (ISOFORM A)</scope>
    <scope>FUNCTION</scope>
    <scope>SUBCELLULAR LOCATION</scope>
    <scope>DEVELOPMENTAL STAGE</scope>
    <scope>DISRUPTION PHENOTYPE</scope>
    <source>
        <tissue evidence="4">Embryo</tissue>
    </source>
</reference>
<reference evidence="16 22" key="2">
    <citation type="journal article" date="2001" name="Mech. Dev.">
        <title>Differential expression of two scribble isoforms during Drosophila embryogenesis.</title>
        <authorList>
            <person name="Li M."/>
            <person name="Marhold J."/>
            <person name="Gatos A."/>
            <person name="Torok I."/>
            <person name="Mechler B.M."/>
        </authorList>
    </citation>
    <scope>NUCLEOTIDE SEQUENCE [MRNA] (ISOFORMS A AND C)</scope>
    <scope>FUNCTION</scope>
    <scope>TISSUE SPECIFICITY</scope>
    <scope>DEVELOPMENTAL STAGE</scope>
</reference>
<reference evidence="16 21" key="3">
    <citation type="journal article" date="2003" name="Genetics">
        <title>Scribble is essential for olfactory behavior in Drosophila melanogaster.</title>
        <authorList>
            <person name="Ganguly I."/>
            <person name="Mackay T.F.C."/>
            <person name="Anholt R.R.H."/>
        </authorList>
    </citation>
    <scope>NUCLEOTIDE SEQUENCE [MRNA] (ISOFORMS A; C; D; E; G AND J)</scope>
    <scope>NUCLEOTIDE SEQUENCE [MRNA] OF 639-1851 (ISOFORM F)</scope>
    <scope>FUNCTION</scope>
    <scope>TISSUE SPECIFICITY</scope>
    <scope>DEVELOPMENTAL STAGE</scope>
    <source>
        <tissue evidence="9">Head</tissue>
    </source>
</reference>
<reference evidence="18" key="4">
    <citation type="journal article" date="2000" name="Science">
        <title>The genome sequence of Drosophila melanogaster.</title>
        <authorList>
            <person name="Adams M.D."/>
            <person name="Celniker S.E."/>
            <person name="Holt R.A."/>
            <person name="Evans C.A."/>
            <person name="Gocayne J.D."/>
            <person name="Amanatides P.G."/>
            <person name="Scherer S.E."/>
            <person name="Li P.W."/>
            <person name="Hoskins R.A."/>
            <person name="Galle R.F."/>
            <person name="George R.A."/>
            <person name="Lewis S.E."/>
            <person name="Richards S."/>
            <person name="Ashburner M."/>
            <person name="Henderson S.N."/>
            <person name="Sutton G.G."/>
            <person name="Wortman J.R."/>
            <person name="Yandell M.D."/>
            <person name="Zhang Q."/>
            <person name="Chen L.X."/>
            <person name="Brandon R.C."/>
            <person name="Rogers Y.-H.C."/>
            <person name="Blazej R.G."/>
            <person name="Champe M."/>
            <person name="Pfeiffer B.D."/>
            <person name="Wan K.H."/>
            <person name="Doyle C."/>
            <person name="Baxter E.G."/>
            <person name="Helt G."/>
            <person name="Nelson C.R."/>
            <person name="Miklos G.L.G."/>
            <person name="Abril J.F."/>
            <person name="Agbayani A."/>
            <person name="An H.-J."/>
            <person name="Andrews-Pfannkoch C."/>
            <person name="Baldwin D."/>
            <person name="Ballew R.M."/>
            <person name="Basu A."/>
            <person name="Baxendale J."/>
            <person name="Bayraktaroglu L."/>
            <person name="Beasley E.M."/>
            <person name="Beeson K.Y."/>
            <person name="Benos P.V."/>
            <person name="Berman B.P."/>
            <person name="Bhandari D."/>
            <person name="Bolshakov S."/>
            <person name="Borkova D."/>
            <person name="Botchan M.R."/>
            <person name="Bouck J."/>
            <person name="Brokstein P."/>
            <person name="Brottier P."/>
            <person name="Burtis K.C."/>
            <person name="Busam D.A."/>
            <person name="Butler H."/>
            <person name="Cadieu E."/>
            <person name="Center A."/>
            <person name="Chandra I."/>
            <person name="Cherry J.M."/>
            <person name="Cawley S."/>
            <person name="Dahlke C."/>
            <person name="Davenport L.B."/>
            <person name="Davies P."/>
            <person name="de Pablos B."/>
            <person name="Delcher A."/>
            <person name="Deng Z."/>
            <person name="Mays A.D."/>
            <person name="Dew I."/>
            <person name="Dietz S.M."/>
            <person name="Dodson K."/>
            <person name="Doup L.E."/>
            <person name="Downes M."/>
            <person name="Dugan-Rocha S."/>
            <person name="Dunkov B.C."/>
            <person name="Dunn P."/>
            <person name="Durbin K.J."/>
            <person name="Evangelista C.C."/>
            <person name="Ferraz C."/>
            <person name="Ferriera S."/>
            <person name="Fleischmann W."/>
            <person name="Fosler C."/>
            <person name="Gabrielian A.E."/>
            <person name="Garg N.S."/>
            <person name="Gelbart W.M."/>
            <person name="Glasser K."/>
            <person name="Glodek A."/>
            <person name="Gong F."/>
            <person name="Gorrell J.H."/>
            <person name="Gu Z."/>
            <person name="Guan P."/>
            <person name="Harris M."/>
            <person name="Harris N.L."/>
            <person name="Harvey D.A."/>
            <person name="Heiman T.J."/>
            <person name="Hernandez J.R."/>
            <person name="Houck J."/>
            <person name="Hostin D."/>
            <person name="Houston K.A."/>
            <person name="Howland T.J."/>
            <person name="Wei M.-H."/>
            <person name="Ibegwam C."/>
            <person name="Jalali M."/>
            <person name="Kalush F."/>
            <person name="Karpen G.H."/>
            <person name="Ke Z."/>
            <person name="Kennison J.A."/>
            <person name="Ketchum K.A."/>
            <person name="Kimmel B.E."/>
            <person name="Kodira C.D."/>
            <person name="Kraft C.L."/>
            <person name="Kravitz S."/>
            <person name="Kulp D."/>
            <person name="Lai Z."/>
            <person name="Lasko P."/>
            <person name="Lei Y."/>
            <person name="Levitsky A.A."/>
            <person name="Li J.H."/>
            <person name="Li Z."/>
            <person name="Liang Y."/>
            <person name="Lin X."/>
            <person name="Liu X."/>
            <person name="Mattei B."/>
            <person name="McIntosh T.C."/>
            <person name="McLeod M.P."/>
            <person name="McPherson D."/>
            <person name="Merkulov G."/>
            <person name="Milshina N.V."/>
            <person name="Mobarry C."/>
            <person name="Morris J."/>
            <person name="Moshrefi A."/>
            <person name="Mount S.M."/>
            <person name="Moy M."/>
            <person name="Murphy B."/>
            <person name="Murphy L."/>
            <person name="Muzny D.M."/>
            <person name="Nelson D.L."/>
            <person name="Nelson D.R."/>
            <person name="Nelson K.A."/>
            <person name="Nixon K."/>
            <person name="Nusskern D.R."/>
            <person name="Pacleb J.M."/>
            <person name="Palazzolo M."/>
            <person name="Pittman G.S."/>
            <person name="Pan S."/>
            <person name="Pollard J."/>
            <person name="Puri V."/>
            <person name="Reese M.G."/>
            <person name="Reinert K."/>
            <person name="Remington K."/>
            <person name="Saunders R.D.C."/>
            <person name="Scheeler F."/>
            <person name="Shen H."/>
            <person name="Shue B.C."/>
            <person name="Siden-Kiamos I."/>
            <person name="Simpson M."/>
            <person name="Skupski M.P."/>
            <person name="Smith T.J."/>
            <person name="Spier E."/>
            <person name="Spradling A.C."/>
            <person name="Stapleton M."/>
            <person name="Strong R."/>
            <person name="Sun E."/>
            <person name="Svirskas R."/>
            <person name="Tector C."/>
            <person name="Turner R."/>
            <person name="Venter E."/>
            <person name="Wang A.H."/>
            <person name="Wang X."/>
            <person name="Wang Z.-Y."/>
            <person name="Wassarman D.A."/>
            <person name="Weinstock G.M."/>
            <person name="Weissenbach J."/>
            <person name="Williams S.M."/>
            <person name="Woodage T."/>
            <person name="Worley K.C."/>
            <person name="Wu D."/>
            <person name="Yang S."/>
            <person name="Yao Q.A."/>
            <person name="Ye J."/>
            <person name="Yeh R.-F."/>
            <person name="Zaveri J.S."/>
            <person name="Zhan M."/>
            <person name="Zhang G."/>
            <person name="Zhao Q."/>
            <person name="Zheng L."/>
            <person name="Zheng X.H."/>
            <person name="Zhong F.N."/>
            <person name="Zhong W."/>
            <person name="Zhou X."/>
            <person name="Zhu S.C."/>
            <person name="Zhu X."/>
            <person name="Smith H.O."/>
            <person name="Gibbs R.A."/>
            <person name="Myers E.W."/>
            <person name="Rubin G.M."/>
            <person name="Venter J.C."/>
        </authorList>
    </citation>
    <scope>NUCLEOTIDE SEQUENCE [LARGE SCALE GENOMIC DNA]</scope>
    <source>
        <strain evidence="5">Berkeley</strain>
    </source>
</reference>
<reference evidence="16 18" key="5">
    <citation type="journal article" date="2002" name="Genome Biol.">
        <title>Annotation of the Drosophila melanogaster euchromatic genome: a systematic review.</title>
        <authorList>
            <person name="Misra S."/>
            <person name="Crosby M.A."/>
            <person name="Mungall C.J."/>
            <person name="Matthews B.B."/>
            <person name="Campbell K.S."/>
            <person name="Hradecky P."/>
            <person name="Huang Y."/>
            <person name="Kaminker J.S."/>
            <person name="Millburn G.H."/>
            <person name="Prochnik S.E."/>
            <person name="Smith C.D."/>
            <person name="Tupy J.L."/>
            <person name="Whitfield E.J."/>
            <person name="Bayraktaroglu L."/>
            <person name="Berman B.P."/>
            <person name="Bettencourt B.R."/>
            <person name="Celniker S.E."/>
            <person name="de Grey A.D.N.J."/>
            <person name="Drysdale R.A."/>
            <person name="Harris N.L."/>
            <person name="Richter J."/>
            <person name="Russo S."/>
            <person name="Schroeder A.J."/>
            <person name="Shu S.Q."/>
            <person name="Stapleton M."/>
            <person name="Yamada C."/>
            <person name="Ashburner M."/>
            <person name="Gelbart W.M."/>
            <person name="Rubin G.M."/>
            <person name="Lewis S.E."/>
        </authorList>
    </citation>
    <scope>GENOME REANNOTATION</scope>
    <scope>ALTERNATIVE SPLICING</scope>
    <source>
        <strain>Berkeley</strain>
    </source>
</reference>
<reference evidence="16 20" key="6">
    <citation type="submission" date="2004-08" db="EMBL/GenBank/DDBJ databases">
        <authorList>
            <person name="Stapleton M."/>
            <person name="Brokstein P."/>
            <person name="Hong L."/>
            <person name="Agbayani A."/>
            <person name="Carlson J.W."/>
            <person name="Champe M."/>
            <person name="Chavez C."/>
            <person name="Dorsett V."/>
            <person name="Dresnek D."/>
            <person name="Farfan D."/>
            <person name="Frise E."/>
            <person name="George R.A."/>
            <person name="Gonzalez M."/>
            <person name="Guarin H."/>
            <person name="Kronmiller B."/>
            <person name="Li P.W."/>
            <person name="Liao G."/>
            <person name="Miranda A."/>
            <person name="Mungall C.J."/>
            <person name="Nunoo J."/>
            <person name="Pacleb J.M."/>
            <person name="Paragas V."/>
            <person name="Park S."/>
            <person name="Patel S."/>
            <person name="Phouanenavong S."/>
            <person name="Wan K.H."/>
            <person name="Yu C."/>
            <person name="Lewis S.E."/>
            <person name="Rubin G.M."/>
            <person name="Celniker S.E."/>
        </authorList>
    </citation>
    <scope>NUCLEOTIDE SEQUENCE [LARGE SCALE MRNA] (ISOFORM A)</scope>
    <source>
        <strain evidence="20">Berkeley</strain>
        <tissue>Embryo</tissue>
    </source>
</reference>
<reference evidence="16 19" key="7">
    <citation type="journal article" date="2002" name="Genome Biol.">
        <title>A Drosophila full-length cDNA resource.</title>
        <authorList>
            <person name="Stapleton M."/>
            <person name="Carlson J.W."/>
            <person name="Brokstein P."/>
            <person name="Yu C."/>
            <person name="Champe M."/>
            <person name="George R.A."/>
            <person name="Guarin H."/>
            <person name="Kronmiller B."/>
            <person name="Pacleb J.M."/>
            <person name="Park S."/>
            <person name="Wan K.H."/>
            <person name="Rubin G.M."/>
            <person name="Celniker S.E."/>
        </authorList>
    </citation>
    <scope>NUCLEOTIDE SEQUENCE [LARGE SCALE MRNA] OF 1647-1851 (ISOFORMS A/C/D/E/G/H)</scope>
    <source>
        <strain evidence="8">Berkeley</strain>
        <tissue evidence="8">Embryo</tissue>
    </source>
</reference>
<reference evidence="16" key="8">
    <citation type="journal article" date="2000" name="Science">
        <title>Cooperative regulation of cell polarity and growth by Drosophila tumor suppressors.</title>
        <authorList>
            <person name="Bilder D."/>
            <person name="Li M."/>
            <person name="Perrimon N."/>
        </authorList>
    </citation>
    <scope>FUNCTION</scope>
    <scope>SUBCELLULAR LOCATION</scope>
    <scope>TISSUE SPECIFICITY</scope>
</reference>
<reference key="9">
    <citation type="journal article" date="2008" name="J. Proteome Res.">
        <title>Phosphoproteome analysis of Drosophila melanogaster embryos.</title>
        <authorList>
            <person name="Zhai B."/>
            <person name="Villen J."/>
            <person name="Beausoleil S.A."/>
            <person name="Mintseris J."/>
            <person name="Gygi S.P."/>
        </authorList>
    </citation>
    <scope>PHOSPHORYLATION [LARGE SCALE ANALYSIS] AT SER-433; SER-435; SER-700; SER-702; SER-705; SER-834; SER-837; SER-1031; SER-1041; SER-1475; SER-1477; SER-1478 AND THR-1599</scope>
    <scope>IDENTIFICATION BY MASS SPECTROMETRY</scope>
    <source>
        <tissue>Embryo</tissue>
    </source>
</reference>
<name>SCRIB_DROME</name>
<evidence type="ECO:0000255" key="1"/>
<evidence type="ECO:0000255" key="2">
    <source>
        <dbReference type="PROSITE-ProRule" id="PRU00143"/>
    </source>
</evidence>
<evidence type="ECO:0000256" key="3">
    <source>
        <dbReference type="SAM" id="MobiDB-lite"/>
    </source>
</evidence>
<evidence type="ECO:0000269" key="4">
    <source>
    </source>
</evidence>
<evidence type="ECO:0000269" key="5">
    <source>
    </source>
</evidence>
<evidence type="ECO:0000269" key="6">
    <source>
    </source>
</evidence>
<evidence type="ECO:0000269" key="7">
    <source>
    </source>
</evidence>
<evidence type="ECO:0000269" key="8">
    <source>
    </source>
</evidence>
<evidence type="ECO:0000269" key="9">
    <source>
    </source>
</evidence>
<evidence type="ECO:0000269" key="10">
    <source>
    </source>
</evidence>
<evidence type="ECO:0000303" key="11">
    <source>
    </source>
</evidence>
<evidence type="ECO:0000303" key="12">
    <source>
    </source>
</evidence>
<evidence type="ECO:0000303" key="13">
    <source>
    </source>
</evidence>
<evidence type="ECO:0000303" key="14">
    <source>
    </source>
</evidence>
<evidence type="ECO:0000303" key="15">
    <source ref="6"/>
</evidence>
<evidence type="ECO:0000305" key="16"/>
<evidence type="ECO:0000312" key="17">
    <source>
        <dbReference type="EMBL" id="AAF26357.2"/>
    </source>
</evidence>
<evidence type="ECO:0000312" key="18">
    <source>
        <dbReference type="EMBL" id="AAF56598.2"/>
    </source>
</evidence>
<evidence type="ECO:0000312" key="19">
    <source>
        <dbReference type="EMBL" id="AAL25508.1"/>
    </source>
</evidence>
<evidence type="ECO:0000312" key="20">
    <source>
        <dbReference type="EMBL" id="AAL39806.2"/>
    </source>
</evidence>
<evidence type="ECO:0000312" key="21">
    <source>
        <dbReference type="EMBL" id="AAO32792.1"/>
    </source>
</evidence>
<evidence type="ECO:0000312" key="22">
    <source>
        <dbReference type="EMBL" id="CAB70601.1"/>
    </source>
</evidence>
<evidence type="ECO:0000312" key="23">
    <source>
        <dbReference type="EMBL" id="CAB71137.1"/>
    </source>
</evidence>
<evidence type="ECO:0000312" key="24">
    <source>
        <dbReference type="FlyBase" id="FBgn0263289"/>
    </source>
</evidence>
<evidence type="ECO:0007829" key="25">
    <source>
        <dbReference type="PDB" id="5WOU"/>
    </source>
</evidence>
<keyword id="KW-0002">3D-structure</keyword>
<keyword id="KW-0025">Alternative splicing</keyword>
<keyword id="KW-0965">Cell junction</keyword>
<keyword id="KW-1003">Cell membrane</keyword>
<keyword id="KW-0175">Coiled coil</keyword>
<keyword id="KW-0963">Cytoplasm</keyword>
<keyword id="KW-0217">Developmental protein</keyword>
<keyword id="KW-0221">Differentiation</keyword>
<keyword id="KW-0433">Leucine-rich repeat</keyword>
<keyword id="KW-0472">Membrane</keyword>
<keyword id="KW-0524">Neurogenesis</keyword>
<keyword id="KW-0552">Olfaction</keyword>
<keyword id="KW-0597">Phosphoprotein</keyword>
<keyword id="KW-1185">Reference proteome</keyword>
<keyword id="KW-0677">Repeat</keyword>
<keyword id="KW-0716">Sensory transduction</keyword>
<sequence>MFKCIPIFKGCNRQVEFVDKRHCSLPQVPEEILRYSRTLEELFLDANHIRDLPKNFFRLHRLRKLGLSDNEIGRLPPDIQNFENLVELDVSRNDIPDIPDDIKHLQSLQVADFSSNPIPKLPSGFSQLKNLTVLGLNDMSLTTLPADFGSLTQLESLELRENLLKHLPETISQLTKLKRLDLGDNEIEDLPPYLGYLPGLHELWLDHNQLQRLPPELGLLTKLTYLDVSENRLEELPNEISGLVSLTDLDLAQNLLEALPDGIAKLSRLTILKLDQNRLQRLNDTLGNCENMQELILTENFLSELPASIGQMTKLNNLNVDRNALEYLPLEIGQCANLGVLSLRDNKLKKLPPELGNCTVLHVLDVSGNQLLYLPYSLVNLQLKAVWLSENQSQPLLTFQPDTDAETGEQVLSCYLLPQQEYQPITPARDLESDSEPFEEREPSRTVVKFSEEATQEKETPFVRQNTPHPKDLKAKAQKLKVERSRNEEHANLVTLPEENGTKLAETPTETRTIANNHQQQPHPVQQPIVGVNSKQPVVVGVVTPTTTTVAPTGVQGGSEGASSTANNVKAATAAVVAELAATVGGSDEVQDDDEQEDEFESDRRVGFQVEGEDDDFYKRPPKLHRRDTPHHLKNKRVQHLTDKQASEILANALASQERNDTTPQHSLSGKVTSPIEEEEQLEVEQEQQQQQQQHPFDSSLSPISAGKTAEASTDPDNLDGVTELRLEQYEIHIERTAAGLGLSIAGGKGSTPFKGDDDGIFISRVTEAGPADLAGLKVGDKVIKVNGIVVVDADHYQAVQVLKACGAVLVLVVQREVTRLIGHPVFSEDGSVSQISVETRPLVADAPPAASISHERYIPAPIEIVPQQQHLQQQQQQPIQQVAPTHSYSGNVFATPTAAQTVQPAVSAAPNGLLLNGREAPLSYIQLHTTLIRDQIGQGLGFSIAGGKGSPPFKDDCDGIFISRITEGGLAYRDGKIMVGDRVMAINGNDMTEAHHDAAVACLTEPQRFVRLVLQREYRGPLEPPTSPRSPAVLNSLSPSGYLANRPANFSRSVVEVEQPYKYNTLATTTPTPKPTVPASISNNNNTLPSSKTNGFATAAAATIDSSTGQPVPAPRRTNSVPMGDGDIGAGSTTSGDSGEAQPSSLRPLTSDDFQAMIPAHFLSGGSQHQVHVARPNEVGVSAVTVNVNKPQPDLPMFPAAPTELGRVTETITKSTFTETVMTRITDNQLAEPLISEEVVLPKNQGSLGFSIIGGTDHSCVPFGTREPGIFISHIVPGGIASKCGKLRMGDRILKVNEADVSKATHQDAVLELLKPGDEIKLTIQHDPLPPGFQEVLLSKAEGERLGMHIKGGLNGQRGNPADPSDEGVFVSKINSVGAARRDGRLKVGMRLLEVNGHSLLGASHQDAVNVLRNAGNEIQLVVCKGYDKSNLIHSIGQAGGMSTGFNSSASCSGGSRQGSRASETGSELSQSQSVSSLDHEEDERLRQDFDVFASQKPDAQQPTGPSVLAAAAAMVHGASSPTPPAATSNITPLPTAAAVASADLTAPDTPATQTVALIHAEQQAHQQQQQTQLAPLGQEKSTQEKVLEIVRAADAFTTVPPKSPSEHHEQDKIQKTTTVVISKHTLDTNPTTPTTPAAPLSIAGAESANSAGAPSPAVPASTPGSAPVLPAVAVQTQTQTTSTEKDEEEESQLQSTPASRDGAEEQQEEVRAKPTPTKVPKSVSDKKRFFESAMEDQHKPTQKTDKVFSFLSKDEVEKLRQEEERKIATLRRDKNSRLLDAANDNIDKDAAQQRTKSNSNSSSGDDNDDSDQEEGIARGDSVDNAALGHFDDAEDMRNPLDEIEAVFRS</sequence>
<proteinExistence type="evidence at protein level"/>
<accession>Q7KRY7</accession>
<accession>A0A0B4K7L2</accession>
<accession>A4V3G5</accession>
<accession>Q59DT7</accession>
<accession>Q59DT8</accession>
<accession>Q6AWK8</accession>
<accession>Q7K9X1</accession>
<accession>Q7KA36</accession>
<accession>Q86QS7</accession>
<accession>Q86QS8</accession>
<accession>Q86QS9</accession>
<accession>Q86QT0</accession>
<accession>Q8IMR8</accession>
<accession>Q8IMR9</accession>
<accession>Q8T003</accession>
<accession>Q95SV4</accession>
<accession>Q9VBE4</accession>
<comment type="function">
    <text evidence="4 6 7 9">Required for polarization of the embryonic, imaginal disk and follicular epithelia. Specifically restricts apical membrane determinants to the apical cell surface; acts to exclude crb from the basolateral domain and define adherens junction position. Regulates cellular growth and differentiation; acts as a tumor suppressor. Essential for odor guided behavior.</text>
</comment>
<comment type="subcellular location">
    <subcellularLocation>
        <location>Cytoplasm</location>
    </subcellularLocation>
    <subcellularLocation>
        <location evidence="6">Apicolateral cell membrane</location>
        <topology>Peripheral membrane protein</topology>
    </subcellularLocation>
    <subcellularLocation>
        <location evidence="4">Cell junction</location>
        <location evidence="4">Septate junction</location>
    </subcellularLocation>
    <text>Localized to epithelial septate junction at the boundary of the apical and basolateral cell surfaces.</text>
</comment>
<comment type="alternative products">
    <event type="alternative splicing"/>
    <isoform>
        <id>Q7KRY7-1</id>
        <name evidence="9">D</name>
        <sequence type="displayed"/>
    </isoform>
    <isoform>
        <id>Q7KRY7-2</id>
        <name evidence="7">A</name>
        <name evidence="12">B</name>
        <name evidence="13">Scrib1</name>
        <name evidence="22">Vartul-1</name>
        <sequence type="described" ref="VSP_050879"/>
    </isoform>
    <isoform>
        <id>Q7KRY7-3</id>
        <name evidence="7">C</name>
        <name evidence="13">Scrib2</name>
        <name evidence="23">Vartul-2</name>
        <sequence type="described" ref="VSP_050880 VSP_050881"/>
    </isoform>
    <isoform>
        <id>Q7KRY7-4</id>
        <name evidence="9">E</name>
        <sequence type="described" ref="VSP_050877 VSP_050878 VSP_018595"/>
    </isoform>
    <isoform>
        <id>Q7KRY7-5</id>
        <name evidence="9">F</name>
        <sequence type="described" ref="VSP_050882 VSP_050883 VSP_050884"/>
    </isoform>
    <isoform>
        <id>Q7KRY7-6</id>
        <name evidence="9">G</name>
        <sequence type="described" ref="VSP_050876 VSP_050878 VSP_050882"/>
    </isoform>
    <isoform>
        <id>Q7KRY7-7</id>
        <name>H</name>
        <sequence type="described" ref="VSP_035210 VSP_018595"/>
    </isoform>
    <isoform>
        <id>Q7KRY7-8</id>
        <name>I</name>
        <sequence type="described" ref="VSP_050883 VSP_050884"/>
    </isoform>
    <isoform>
        <id>Q7KRY7-9</id>
        <name>J</name>
        <sequence type="described" ref="VSP_018595"/>
    </isoform>
    <isoform>
        <id>Q7KRY7-10</id>
        <name>K</name>
        <sequence type="described" ref="VSP_050879 VSP_042867"/>
    </isoform>
    <isoform>
        <id>Q7KRY7-11</id>
        <name evidence="24">P</name>
        <sequence type="described" ref="VSP_058487 VSP_058488 VSP_058489"/>
    </isoform>
</comment>
<comment type="tissue specificity">
    <text evidence="6 7 9">During germ band extension, expression of isoform A occurs predominantly in neuroblasts derived from the neuro-ectoderm and later is restricted to CNS neurons and pole cells. Isoform C is strongly expressed in PNS and a subset of CNS neurons. In the adult, expressed in third antennal segment and maxillary palps, major olfactory organs and in Johnstons organ in the second antennal segment. Expression is also observed in cortical regions of the brain. Isoforms expressed in epithelia are coexpressed with dlg1 throughout development.</text>
</comment>
<comment type="developmental stage">
    <text evidence="4 7 9">Expressed both zygotically and maternally in embryos. Isoform A and isoform C have high expression throughout embryonic development and very low expression in later developmental stages. In adults, isoform A is a male-specific isoform and isoform C a female specific.</text>
</comment>
<comment type="disruption phenotype">
    <text evidence="4">Flies exhibit aberrant cell shape and loss of the monolayer organization of embryonic epithelia creating a corrugated cuticular surface that is riddled with holes hence the gene name scribble. Misdistribution of apical proteins and adherens junctions to the basolateral cell surface is also exhibited.</text>
</comment>
<comment type="similarity">
    <text evidence="1">Belongs to the LAP (LRR and PDZ) protein family.</text>
</comment>
<comment type="sequence caution" evidence="16">
    <conflict type="miscellaneous discrepancy">
        <sequence resource="EMBL-CDS" id="AAL25508"/>
    </conflict>
    <text>Probable cloning artifact.</text>
</comment>
<feature type="chain" id="PRO_0000188307" description="Protein lap4">
    <location>
        <begin position="1"/>
        <end position="1851"/>
    </location>
</feature>
<feature type="repeat" description="LRR 1">
    <location>
        <begin position="38"/>
        <end position="59"/>
    </location>
</feature>
<feature type="repeat" description="LRR 2">
    <location>
        <begin position="61"/>
        <end position="82"/>
    </location>
</feature>
<feature type="repeat" description="LRR 3">
    <location>
        <begin position="84"/>
        <end position="105"/>
    </location>
</feature>
<feature type="repeat" description="LRR 4">
    <location>
        <begin position="107"/>
        <end position="128"/>
    </location>
</feature>
<feature type="repeat" description="LRR 5">
    <location>
        <begin position="130"/>
        <end position="152"/>
    </location>
</feature>
<feature type="repeat" description="LRR 6">
    <location>
        <begin position="153"/>
        <end position="174"/>
    </location>
</feature>
<feature type="repeat" description="LRR 7">
    <location>
        <begin position="176"/>
        <end position="197"/>
    </location>
</feature>
<feature type="repeat" description="LRR 8">
    <location>
        <begin position="199"/>
        <end position="220"/>
    </location>
</feature>
<feature type="repeat" description="LRR 9">
    <location>
        <begin position="222"/>
        <end position="243"/>
    </location>
</feature>
<feature type="repeat" description="LRR 10">
    <location>
        <begin position="245"/>
        <end position="267"/>
    </location>
</feature>
<feature type="repeat" description="LRR 11">
    <location>
        <begin position="268"/>
        <end position="289"/>
    </location>
</feature>
<feature type="repeat" description="LRR 12">
    <location>
        <begin position="291"/>
        <end position="312"/>
    </location>
</feature>
<feature type="repeat" description="LRR 13">
    <location>
        <begin position="314"/>
        <end position="335"/>
    </location>
</feature>
<feature type="repeat" description="LRR 14">
    <location>
        <begin position="337"/>
        <end position="358"/>
    </location>
</feature>
<feature type="repeat" description="LRR 15">
    <location>
        <begin position="360"/>
        <end position="382"/>
    </location>
</feature>
<feature type="repeat" description="LRR 16">
    <location>
        <begin position="383"/>
        <end position="403"/>
    </location>
</feature>
<feature type="domain" description="PDZ 1" evidence="2">
    <location>
        <begin position="731"/>
        <end position="818"/>
    </location>
</feature>
<feature type="domain" description="PDZ 2" evidence="2">
    <location>
        <begin position="929"/>
        <end position="1019"/>
    </location>
</feature>
<feature type="domain" description="PDZ 3" evidence="2">
    <location>
        <begin position="1239"/>
        <end position="1329"/>
    </location>
</feature>
<feature type="domain" description="PDZ 4" evidence="2">
    <location>
        <begin position="1336"/>
        <end position="1428"/>
    </location>
</feature>
<feature type="region of interest" description="Disordered" evidence="3">
    <location>
        <begin position="427"/>
        <end position="474"/>
    </location>
</feature>
<feature type="region of interest" description="Disordered" evidence="3">
    <location>
        <begin position="584"/>
        <end position="641"/>
    </location>
</feature>
<feature type="region of interest" description="Disordered" evidence="3">
    <location>
        <begin position="656"/>
        <end position="719"/>
    </location>
</feature>
<feature type="region of interest" description="Disordered" evidence="3">
    <location>
        <begin position="1067"/>
        <end position="1150"/>
    </location>
</feature>
<feature type="region of interest" description="Disordered" evidence="3">
    <location>
        <begin position="1448"/>
        <end position="1485"/>
    </location>
</feature>
<feature type="region of interest" description="Disordered" evidence="3">
    <location>
        <begin position="1647"/>
        <end position="1751"/>
    </location>
</feature>
<feature type="region of interest" description="Disordered" evidence="3">
    <location>
        <begin position="1772"/>
        <end position="1851"/>
    </location>
</feature>
<feature type="coiled-coil region" evidence="1">
    <location>
        <begin position="471"/>
        <end position="492"/>
    </location>
</feature>
<feature type="coiled-coil region" evidence="1">
    <location>
        <begin position="677"/>
        <end position="693"/>
    </location>
</feature>
<feature type="coiled-coil region" evidence="1">
    <location>
        <begin position="1753"/>
        <end position="1790"/>
    </location>
</feature>
<feature type="compositionally biased region" description="Basic and acidic residues" evidence="3">
    <location>
        <begin position="438"/>
        <end position="461"/>
    </location>
</feature>
<feature type="compositionally biased region" description="Acidic residues" evidence="3">
    <location>
        <begin position="589"/>
        <end position="601"/>
    </location>
</feature>
<feature type="compositionally biased region" description="Basic residues" evidence="3">
    <location>
        <begin position="620"/>
        <end position="639"/>
    </location>
</feature>
<feature type="compositionally biased region" description="Polar residues" evidence="3">
    <location>
        <begin position="656"/>
        <end position="672"/>
    </location>
</feature>
<feature type="compositionally biased region" description="Acidic residues" evidence="3">
    <location>
        <begin position="676"/>
        <end position="686"/>
    </location>
</feature>
<feature type="compositionally biased region" description="Polar residues" evidence="3">
    <location>
        <begin position="1080"/>
        <end position="1097"/>
    </location>
</feature>
<feature type="compositionally biased region" description="Polar residues" evidence="3">
    <location>
        <begin position="1132"/>
        <end position="1149"/>
    </location>
</feature>
<feature type="compositionally biased region" description="Polar residues" evidence="3">
    <location>
        <begin position="1448"/>
        <end position="1467"/>
    </location>
</feature>
<feature type="compositionally biased region" description="Low complexity" evidence="3">
    <location>
        <begin position="1468"/>
        <end position="1478"/>
    </location>
</feature>
<feature type="compositionally biased region" description="Low complexity" evidence="3">
    <location>
        <begin position="1647"/>
        <end position="1669"/>
    </location>
</feature>
<feature type="compositionally biased region" description="Basic and acidic residues" evidence="3">
    <location>
        <begin position="1725"/>
        <end position="1751"/>
    </location>
</feature>
<feature type="compositionally biased region" description="Acidic residues" evidence="3">
    <location>
        <begin position="1807"/>
        <end position="1816"/>
    </location>
</feature>
<feature type="compositionally biased region" description="Basic and acidic residues" evidence="3">
    <location>
        <begin position="1831"/>
        <end position="1851"/>
    </location>
</feature>
<feature type="modified residue" description="Phosphoserine" evidence="10">
    <location>
        <position position="433"/>
    </location>
</feature>
<feature type="modified residue" description="Phosphoserine" evidence="10">
    <location>
        <position position="435"/>
    </location>
</feature>
<feature type="modified residue" description="Phosphoserine" evidence="10">
    <location>
        <position position="700"/>
    </location>
</feature>
<feature type="modified residue" description="Phosphoserine" evidence="10">
    <location>
        <position position="702"/>
    </location>
</feature>
<feature type="modified residue" description="Phosphoserine" evidence="10">
    <location>
        <position position="705"/>
    </location>
</feature>
<feature type="modified residue" description="Phosphoserine" evidence="10">
    <location>
        <position position="834"/>
    </location>
</feature>
<feature type="modified residue" description="Phosphoserine" evidence="10">
    <location>
        <position position="837"/>
    </location>
</feature>
<feature type="modified residue" description="Phosphoserine" evidence="10">
    <location>
        <position position="1031"/>
    </location>
</feature>
<feature type="modified residue" description="Phosphoserine" evidence="10">
    <location>
        <position position="1041"/>
    </location>
</feature>
<feature type="modified residue" description="Phosphoserine" evidence="10">
    <location>
        <position position="1475"/>
    </location>
</feature>
<feature type="modified residue" description="Phosphoserine" evidence="10">
    <location>
        <position position="1477"/>
    </location>
</feature>
<feature type="modified residue" description="Phosphoserine" evidence="10">
    <location>
        <position position="1478"/>
    </location>
</feature>
<feature type="modified residue" description="Phosphothreonine" evidence="10">
    <location>
        <position position="1599"/>
    </location>
</feature>
<feature type="splice variant" id="VSP_050876" description="In isoform G." evidence="14">
    <location>
        <begin position="97"/>
        <end position="137"/>
    </location>
</feature>
<feature type="splice variant" id="VSP_050877" description="In isoform E." evidence="14">
    <location>
        <begin position="99"/>
        <end position="137"/>
    </location>
</feature>
<feature type="splice variant" id="VSP_058487" description="In isoform P." evidence="16">
    <original>P</original>
    <variation>PDYPPMTLYRSSEKFDSTEFFSYQQK</variation>
    <location>
        <position position="427"/>
    </location>
</feature>
<feature type="splice variant" id="VSP_050878" description="In isoform E and isoform G." evidence="14">
    <location>
        <begin position="446"/>
        <end position="1051"/>
    </location>
</feature>
<feature type="splice variant" id="VSP_035210" description="In isoform H." evidence="16">
    <original>P</original>
    <variation>PANQAMFNVKIKVKEGNNTLPRNGQRSNGNFSYSGAGSGRNSPAMSSLRSSLASSNRSPSGSLQRKGKRVRIVTSYDPIDRDYERQRQHY</variation>
    <location>
        <position position="716"/>
    </location>
</feature>
<feature type="splice variant" id="VSP_050879" description="In isoform A and isoform K." evidence="11 13 14 15">
    <location>
        <begin position="1144"/>
        <end position="1238"/>
    </location>
</feature>
<feature type="splice variant" id="VSP_018595" description="In isoform E, isoform H and isoform J." evidence="14">
    <location>
        <position position="1238"/>
    </location>
</feature>
<feature type="splice variant" id="VSP_050880" description="In isoform C." evidence="13 14">
    <original>EVVLPKNQG</original>
    <variation>VTISTSRIH</variation>
    <location>
        <begin position="1239"/>
        <end position="1247"/>
    </location>
</feature>
<feature type="splice variant" id="VSP_050881" description="In isoform C." evidence="13 14">
    <location>
        <begin position="1248"/>
        <end position="1851"/>
    </location>
</feature>
<feature type="splice variant" id="VSP_050882" description="In isoform F and isoform G." evidence="14">
    <location>
        <begin position="1468"/>
        <end position="1471"/>
    </location>
</feature>
<feature type="splice variant" id="VSP_050883" description="In isoform F and isoform I." evidence="14">
    <original>STPASRDGAEEQQEE</original>
    <variation>VCTHLTVDARLLSWL</variation>
    <location>
        <begin position="1697"/>
        <end position="1711"/>
    </location>
</feature>
<feature type="splice variant" id="VSP_058488" description="In isoform P." evidence="16">
    <original>STPASRDG</original>
    <variation>LTAEQRIA</variation>
    <location>
        <begin position="1697"/>
        <end position="1704"/>
    </location>
</feature>
<feature type="splice variant" id="VSP_058489" description="In isoform P." evidence="16">
    <location>
        <begin position="1705"/>
        <end position="1851"/>
    </location>
</feature>
<feature type="splice variant" id="VSP_050884" description="In isoform F and isoform I." evidence="14">
    <location>
        <begin position="1712"/>
        <end position="1851"/>
    </location>
</feature>
<feature type="splice variant" id="VSP_042867" description="In isoform K." evidence="16">
    <original>RNPLDEIEAVFRS</original>
    <variation>SAEKRASWRAARLRSLEQGAVEAQDVIKNMRKMTDDLITHESRASEVETCKERIISLELQVPETEDEGKLDDTQPPLELEADDFQDDEDDDDDDDDEDDFEDEDEEEDTASIVTVQANNEKLFLRHDSDTYGPSSIESVASGKVRIKPTPLSLHQTLAKETTIVEVLNPVIGGDGSARTIHVSGGLPFDEDAFEQGAVAVLRSETFVLPGAAGGGRSELSLNAKMKTVLEELLENERVKLNLQKSLEGEEGEDDDDEDENGSAYGDARDEEESAYGDAIDDVVDFGSATVTSRAANDKDDVKNGNQQLLEELIKDSNRNTIIAKLAGQLSDDDEEDDDEEESSDSSDDDSDDSDEEDNAQQQLNVTYVQGAQVIENLNTLATGGKLQKSQTYTAIKQAEEPKEEDTKLEEDPSAEKPCGADTLAKLQAEQRALAEISKQLRKSVEDLLSADGETVVETQRTYTLPAPSDSSAVVTVTEVVKKQKKKKSETGEELFNRLLNAAESERQVFDRQQGETITTTTTTTEAVSSEDNEPSTSVVTTTRTVSNIVTSGIPRPETSKQNNRSSSSSNSNSSNNNRNKNKRKGKKK</variation>
    <location>
        <begin position="1839"/>
        <end position="1851"/>
    </location>
</feature>
<feature type="sequence conflict" description="In Ref. 2; CAB70601/CAB71137 and 3; AAO32791/AAO32792/AAO32794." evidence="16" ref="2 3">
    <original>D</original>
    <variation>N</variation>
    <location>
        <position position="19"/>
    </location>
</feature>
<feature type="sequence conflict" description="In Ref. 2; CAB70601/CAB71137 and 3; AAO32791/AAO32792/AAO32794." evidence="16" ref="2 3">
    <original>E</original>
    <variation>K</variation>
    <location>
        <position position="40"/>
    </location>
</feature>
<feature type="sequence conflict" description="In Ref. 6; AAT94469." evidence="16" ref="6">
    <original>G</original>
    <variation>D</variation>
    <location>
        <position position="262"/>
    </location>
</feature>
<feature type="sequence conflict" description="In Ref. 6; AAT94469." evidence="16" ref="6">
    <original>T</original>
    <variation>I</variation>
    <location>
        <position position="313"/>
    </location>
</feature>
<feature type="sequence conflict" description="In Ref. 2; CAB70601/CAB71137 and 3; AAO32791/AAO32792/AAO32793/AAO32794." evidence="16" ref="2 3">
    <original>S</original>
    <variation>T</variation>
    <location>
        <position position="1108"/>
    </location>
</feature>
<feature type="sequence conflict" description="In Ref. 3; AAO32791/AAO32792." evidence="16" ref="3">
    <location>
        <position position="1239"/>
    </location>
</feature>
<feature type="sequence conflict" description="In Ref. 2; CAB70601 and 3; AAO32791/AAO32792/AAO32793/AAO32794." evidence="16" ref="2 3">
    <original>Q</original>
    <variation>P</variation>
    <location>
        <position position="1326"/>
    </location>
</feature>
<feature type="sequence conflict" description="In Ref. 2; CAB70601 and 3; AAO32791/AAO32792/AAO32793/AAO32794." evidence="16" ref="2 3">
    <original>S</original>
    <variation>N</variation>
    <location>
        <position position="1340"/>
    </location>
</feature>
<feature type="sequence conflict" description="In Ref. 2; CAB70601 and 3; AAO32791/AAO32792/AAO32793/AAO32794." evidence="16" ref="2 3">
    <original>N</original>
    <variation>Y</variation>
    <location>
        <position position="1361"/>
    </location>
</feature>
<feature type="sequence conflict" description="In Ref. 1; AAF26357." evidence="16" ref="1">
    <original>K</original>
    <variation>Q</variation>
    <location>
        <position position="1388"/>
    </location>
</feature>
<feature type="sequence conflict" description="In Ref. 2; CAB70601 and 3; AAO32791/AAO32792/AAO32793/AAO32794." evidence="16" ref="2 3">
    <original>A</original>
    <variation>P</variation>
    <location>
        <position position="1540"/>
    </location>
</feature>
<feature type="sequence conflict" description="In Ref. 2; CAB70601 and 3; AAO32791/AAO32792/AAO32793/AAO32794." evidence="16" ref="2 3">
    <original>D</original>
    <variation>Y</variation>
    <location>
        <position position="1688"/>
    </location>
</feature>
<feature type="sequence conflict" description="In Ref. 7; AAL25508." evidence="16" ref="7">
    <original>A</original>
    <variation>S</variation>
    <location>
        <position position="1700"/>
    </location>
</feature>
<feature type="sequence conflict" description="In Ref. 2; CAB70601 and 3; AAO32791/AAO32792/AAO32794." evidence="16" ref="2 3">
    <original>K</original>
    <variation>R</variation>
    <location>
        <position position="1741"/>
    </location>
</feature>
<feature type="sequence conflict" description="In Ref. 2; CAB70601 and 3; AAO32791/AAO32792/AAO32794." evidence="16" ref="2 3">
    <original>I</original>
    <variation>F</variation>
    <location>
        <position position="1769"/>
    </location>
</feature>
<feature type="sequence conflict" description="In Ref. 6; AAL39806." evidence="16" ref="6">
    <original>D</original>
    <variation>V</variation>
    <location>
        <position position="1833"/>
    </location>
</feature>
<feature type="strand" evidence="25">
    <location>
        <begin position="726"/>
        <end position="735"/>
    </location>
</feature>
<feature type="strand" evidence="25">
    <location>
        <begin position="742"/>
        <end position="747"/>
    </location>
</feature>
<feature type="strand" evidence="25">
    <location>
        <begin position="760"/>
        <end position="766"/>
    </location>
</feature>
<feature type="helix" evidence="25">
    <location>
        <begin position="771"/>
        <end position="775"/>
    </location>
</feature>
<feature type="strand" evidence="25">
    <location>
        <begin position="782"/>
        <end position="786"/>
    </location>
</feature>
<feature type="helix" evidence="25">
    <location>
        <begin position="796"/>
        <end position="805"/>
    </location>
</feature>
<feature type="strand" evidence="25">
    <location>
        <begin position="808"/>
        <end position="818"/>
    </location>
</feature>
<dbReference type="EMBL" id="AF190774">
    <property type="protein sequence ID" value="AAF26357.2"/>
    <property type="molecule type" value="mRNA"/>
</dbReference>
<dbReference type="EMBL" id="AJ252084">
    <property type="protein sequence ID" value="CAB70601.1"/>
    <property type="molecule type" value="mRNA"/>
</dbReference>
<dbReference type="EMBL" id="AJ271647">
    <property type="protein sequence ID" value="CAB71137.1"/>
    <property type="molecule type" value="mRNA"/>
</dbReference>
<dbReference type="EMBL" id="AY167903">
    <property type="protein sequence ID" value="AAO32791.1"/>
    <property type="molecule type" value="mRNA"/>
</dbReference>
<dbReference type="EMBL" id="AY167904">
    <property type="protein sequence ID" value="AAO32792.1"/>
    <property type="molecule type" value="mRNA"/>
</dbReference>
<dbReference type="EMBL" id="AY167905">
    <property type="protein sequence ID" value="AAO32793.1"/>
    <property type="molecule type" value="mRNA"/>
</dbReference>
<dbReference type="EMBL" id="AY167906">
    <property type="protein sequence ID" value="AAO32794.1"/>
    <property type="molecule type" value="mRNA"/>
</dbReference>
<dbReference type="EMBL" id="AE014297">
    <property type="protein sequence ID" value="AAF56598.2"/>
    <property type="molecule type" value="Genomic_DNA"/>
</dbReference>
<dbReference type="EMBL" id="AE014297">
    <property type="protein sequence ID" value="AAN14076.1"/>
    <property type="molecule type" value="Genomic_DNA"/>
</dbReference>
<dbReference type="EMBL" id="AE014297">
    <property type="protein sequence ID" value="AAN14077.2"/>
    <property type="molecule type" value="Genomic_DNA"/>
</dbReference>
<dbReference type="EMBL" id="AE014297">
    <property type="protein sequence ID" value="AAN14078.1"/>
    <property type="molecule type" value="Genomic_DNA"/>
</dbReference>
<dbReference type="EMBL" id="AE014297">
    <property type="protein sequence ID" value="AAX52995.2"/>
    <property type="molecule type" value="Genomic_DNA"/>
</dbReference>
<dbReference type="EMBL" id="AE014297">
    <property type="protein sequence ID" value="AAX52996.1"/>
    <property type="molecule type" value="Genomic_DNA"/>
</dbReference>
<dbReference type="EMBL" id="AE014297">
    <property type="protein sequence ID" value="ABI31210.3"/>
    <property type="molecule type" value="Genomic_DNA"/>
</dbReference>
<dbReference type="EMBL" id="AE014297">
    <property type="protein sequence ID" value="AFH06635.1"/>
    <property type="molecule type" value="Genomic_DNA"/>
</dbReference>
<dbReference type="EMBL" id="AY069661">
    <property type="protein sequence ID" value="AAL39806.2"/>
    <property type="molecule type" value="mRNA"/>
</dbReference>
<dbReference type="EMBL" id="BT015240">
    <property type="protein sequence ID" value="AAT94469.1"/>
    <property type="molecule type" value="mRNA"/>
</dbReference>
<dbReference type="EMBL" id="AY060469">
    <property type="protein sequence ID" value="AAL25508.1"/>
    <property type="status" value="ALT_SEQ"/>
    <property type="molecule type" value="mRNA"/>
</dbReference>
<dbReference type="RefSeq" id="NP_001014669.1">
    <molecule id="Q7KRY7-8"/>
    <property type="nucleotide sequence ID" value="NM_001014669.3"/>
</dbReference>
<dbReference type="RefSeq" id="NP_001014670.2">
    <molecule id="Q7KRY7-7"/>
    <property type="nucleotide sequence ID" value="NM_001014670.4"/>
</dbReference>
<dbReference type="RefSeq" id="NP_001036761.3">
    <molecule id="Q7KRY7-2"/>
    <property type="nucleotide sequence ID" value="NM_001043296.3"/>
</dbReference>
<dbReference type="RefSeq" id="NP_001247318.1">
    <molecule id="Q7KRY7-10"/>
    <property type="nucleotide sequence ID" value="NM_001260389.1"/>
</dbReference>
<dbReference type="RefSeq" id="NP_524754.2">
    <molecule id="Q7KRY7-1"/>
    <property type="nucleotide sequence ID" value="NM_080015.4"/>
</dbReference>
<dbReference type="RefSeq" id="NP_733154.1">
    <molecule id="Q7KRY7-2"/>
    <property type="nucleotide sequence ID" value="NM_170275.3"/>
</dbReference>
<dbReference type="RefSeq" id="NP_733155.2">
    <molecule id="Q7KRY7-11"/>
    <property type="nucleotide sequence ID" value="NM_170276.3"/>
</dbReference>
<dbReference type="RefSeq" id="NP_733156.1">
    <molecule id="Q7KRY7-3"/>
    <property type="nucleotide sequence ID" value="NM_170277.4"/>
</dbReference>
<dbReference type="PDB" id="5WOU">
    <property type="method" value="X-ray"/>
    <property type="resolution" value="1.55 A"/>
    <property type="chains" value="A=726-820"/>
</dbReference>
<dbReference type="PDBsum" id="5WOU"/>
<dbReference type="SMR" id="Q7KRY7"/>
<dbReference type="BioGRID" id="69066">
    <property type="interactions" value="58"/>
</dbReference>
<dbReference type="ComplexPortal" id="CPX-2410">
    <property type="entry name" value="Scribble cell polarity complex"/>
</dbReference>
<dbReference type="FunCoup" id="Q7KRY7">
    <property type="interactions" value="912"/>
</dbReference>
<dbReference type="IntAct" id="Q7KRY7">
    <property type="interactions" value="3"/>
</dbReference>
<dbReference type="MINT" id="Q7KRY7"/>
<dbReference type="STRING" id="7227.FBpp0300852"/>
<dbReference type="TCDB" id="1.H.2.1.1">
    <property type="family name" value="the invertebrate pmp22-claudin (claudin2) family"/>
</dbReference>
<dbReference type="GlyGen" id="Q7KRY7">
    <property type="glycosylation" value="4 sites, 1 O-linked glycan (1 site)"/>
</dbReference>
<dbReference type="iPTMnet" id="Q7KRY7"/>
<dbReference type="SwissPalm" id="Q7KRY7"/>
<dbReference type="PaxDb" id="7227-FBpp0300852"/>
<dbReference type="PeptideAtlas" id="Q7KRY7"/>
<dbReference type="EnsemblMetazoa" id="FBtr0308620">
    <molecule id="Q7KRY7-2"/>
    <property type="protein sequence ID" value="FBpp0300844"/>
    <property type="gene ID" value="FBgn0263289"/>
</dbReference>
<dbReference type="EnsemblMetazoa" id="FBtr0308621">
    <molecule id="Q7KRY7-2"/>
    <property type="protein sequence ID" value="FBpp0300845"/>
    <property type="gene ID" value="FBgn0263289"/>
</dbReference>
<dbReference type="EnsemblMetazoa" id="FBtr0308622">
    <molecule id="Q7KRY7-7"/>
    <property type="protein sequence ID" value="FBpp0300846"/>
    <property type="gene ID" value="FBgn0263289"/>
</dbReference>
<dbReference type="EnsemblMetazoa" id="FBtr0308623">
    <molecule id="Q7KRY7-8"/>
    <property type="protein sequence ID" value="FBpp0300847"/>
    <property type="gene ID" value="FBgn0263289"/>
</dbReference>
<dbReference type="EnsemblMetazoa" id="FBtr0308624">
    <molecule id="Q7KRY7-3"/>
    <property type="protein sequence ID" value="FBpp0300848"/>
    <property type="gene ID" value="FBgn0263289"/>
</dbReference>
<dbReference type="EnsemblMetazoa" id="FBtr0308625">
    <molecule id="Q7KRY7-1"/>
    <property type="protein sequence ID" value="FBpp0300849"/>
    <property type="gene ID" value="FBgn0263289"/>
</dbReference>
<dbReference type="EnsemblMetazoa" id="FBtr0308627">
    <molecule id="Q7KRY7-10"/>
    <property type="protein sequence ID" value="FBpp0300851"/>
    <property type="gene ID" value="FBgn0263289"/>
</dbReference>
<dbReference type="EnsemblMetazoa" id="FBtr0308632">
    <molecule id="Q7KRY7-11"/>
    <property type="protein sequence ID" value="FBpp0300856"/>
    <property type="gene ID" value="FBgn0263289"/>
</dbReference>
<dbReference type="GeneID" id="44448"/>
<dbReference type="KEGG" id="dme:Dmel_CG43398"/>
<dbReference type="UCSC" id="CG5462-RB">
    <property type="organism name" value="d. melanogaster"/>
</dbReference>
<dbReference type="AGR" id="FB:FBgn0263289"/>
<dbReference type="CTD" id="23513"/>
<dbReference type="FlyBase" id="FBgn0263289">
    <property type="gene designation" value="scrib"/>
</dbReference>
<dbReference type="VEuPathDB" id="VectorBase:FBgn0263289"/>
<dbReference type="eggNOG" id="KOG0619">
    <property type="taxonomic scope" value="Eukaryota"/>
</dbReference>
<dbReference type="InParanoid" id="Q7KRY7"/>
<dbReference type="OrthoDB" id="2187496at2759"/>
<dbReference type="PhylomeDB" id="Q7KRY7"/>
<dbReference type="Reactome" id="R-DME-438066">
    <property type="pathway name" value="Unblocking of NMDA receptors, glutamate binding and activation"/>
</dbReference>
<dbReference type="Reactome" id="R-DME-6798695">
    <property type="pathway name" value="Neutrophil degranulation"/>
</dbReference>
<dbReference type="Reactome" id="R-DME-9013406">
    <property type="pathway name" value="RHOQ GTPase cycle"/>
</dbReference>
<dbReference type="SignaLink" id="Q7KRY7"/>
<dbReference type="BioGRID-ORCS" id="44448">
    <property type="hits" value="0 hits in 3 CRISPR screens"/>
</dbReference>
<dbReference type="ChiTaRS" id="scrib">
    <property type="organism name" value="fly"/>
</dbReference>
<dbReference type="GenomeRNAi" id="44448"/>
<dbReference type="PRO" id="PR:Q7KRY7"/>
<dbReference type="Proteomes" id="UP000000803">
    <property type="component" value="Chromosome 3R"/>
</dbReference>
<dbReference type="Bgee" id="FBgn0263289">
    <property type="expression patterns" value="Expressed in adult differentiating enterocyte in digestive tract and 295 other cell types or tissues"/>
</dbReference>
<dbReference type="ExpressionAtlas" id="Q7KRY7">
    <property type="expression patterns" value="baseline and differential"/>
</dbReference>
<dbReference type="GO" id="GO:0005912">
    <property type="term" value="C:adherens junction"/>
    <property type="evidence" value="ECO:0000318"/>
    <property type="project" value="GO_Central"/>
</dbReference>
<dbReference type="GO" id="GO:0045179">
    <property type="term" value="C:apical cortex"/>
    <property type="evidence" value="ECO:0000314"/>
    <property type="project" value="FlyBase"/>
</dbReference>
<dbReference type="GO" id="GO:0016327">
    <property type="term" value="C:apicolateral plasma membrane"/>
    <property type="evidence" value="ECO:0000314"/>
    <property type="project" value="FlyBase"/>
</dbReference>
<dbReference type="GO" id="GO:1990794">
    <property type="term" value="C:basolateral part of cell"/>
    <property type="evidence" value="ECO:0000314"/>
    <property type="project" value="FlyBase"/>
</dbReference>
<dbReference type="GO" id="GO:0016323">
    <property type="term" value="C:basolateral plasma membrane"/>
    <property type="evidence" value="ECO:0000314"/>
    <property type="project" value="FlyBase"/>
</dbReference>
<dbReference type="GO" id="GO:0005938">
    <property type="term" value="C:cell cortex"/>
    <property type="evidence" value="ECO:0000314"/>
    <property type="project" value="FlyBase"/>
</dbReference>
<dbReference type="GO" id="GO:0045169">
    <property type="term" value="C:fusome"/>
    <property type="evidence" value="ECO:0000314"/>
    <property type="project" value="FlyBase"/>
</dbReference>
<dbReference type="GO" id="GO:0016328">
    <property type="term" value="C:lateral plasma membrane"/>
    <property type="evidence" value="ECO:0000314"/>
    <property type="project" value="FlyBase"/>
</dbReference>
<dbReference type="GO" id="GO:0031594">
    <property type="term" value="C:neuromuscular junction"/>
    <property type="evidence" value="ECO:0000314"/>
    <property type="project" value="FlyBase"/>
</dbReference>
<dbReference type="GO" id="GO:0014069">
    <property type="term" value="C:postsynaptic density"/>
    <property type="evidence" value="ECO:0000318"/>
    <property type="project" value="GO_Central"/>
</dbReference>
<dbReference type="GO" id="GO:0005918">
    <property type="term" value="C:septate junction"/>
    <property type="evidence" value="ECO:0000314"/>
    <property type="project" value="FlyBase"/>
</dbReference>
<dbReference type="GO" id="GO:0019901">
    <property type="term" value="F:protein kinase binding"/>
    <property type="evidence" value="ECO:0000318"/>
    <property type="project" value="GO_Central"/>
</dbReference>
<dbReference type="GO" id="GO:0030714">
    <property type="term" value="P:anterior/posterior axis specification, follicular epithelium"/>
    <property type="evidence" value="ECO:0000315"/>
    <property type="project" value="BHF-UCL"/>
</dbReference>
<dbReference type="GO" id="GO:0045175">
    <property type="term" value="P:basal protein localization"/>
    <property type="evidence" value="ECO:0000315"/>
    <property type="project" value="FlyBase"/>
</dbReference>
<dbReference type="GO" id="GO:0060581">
    <property type="term" value="P:cell fate commitment involved in pattern specification"/>
    <property type="evidence" value="ECO:0000315"/>
    <property type="project" value="BHF-UCL"/>
</dbReference>
<dbReference type="GO" id="GO:0001708">
    <property type="term" value="P:cell fate specification"/>
    <property type="evidence" value="ECO:0000315"/>
    <property type="project" value="BHF-UCL"/>
</dbReference>
<dbReference type="GO" id="GO:0000902">
    <property type="term" value="P:cell morphogenesis"/>
    <property type="evidence" value="ECO:0000315"/>
    <property type="project" value="FlyBase"/>
</dbReference>
<dbReference type="GO" id="GO:0098609">
    <property type="term" value="P:cell-cell adhesion"/>
    <property type="evidence" value="ECO:0000318"/>
    <property type="project" value="GO_Central"/>
</dbReference>
<dbReference type="GO" id="GO:0048749">
    <property type="term" value="P:compound eye development"/>
    <property type="evidence" value="ECO:0000315"/>
    <property type="project" value="FlyBase"/>
</dbReference>
<dbReference type="GO" id="GO:0007391">
    <property type="term" value="P:dorsal closure"/>
    <property type="evidence" value="ECO:0000315"/>
    <property type="project" value="FlyBase"/>
</dbReference>
<dbReference type="GO" id="GO:0045198">
    <property type="term" value="P:establishment of epithelial cell apical/basal polarity"/>
    <property type="evidence" value="ECO:0000315"/>
    <property type="project" value="FlyBase"/>
</dbReference>
<dbReference type="GO" id="GO:0001737">
    <property type="term" value="P:establishment of imaginal disc-derived wing hair orientation"/>
    <property type="evidence" value="ECO:0000315"/>
    <property type="project" value="FlyBase"/>
</dbReference>
<dbReference type="GO" id="GO:0042067">
    <property type="term" value="P:establishment of ommatidial planar polarity"/>
    <property type="evidence" value="ECO:0000315"/>
    <property type="project" value="FlyBase"/>
</dbReference>
<dbReference type="GO" id="GO:0035088">
    <property type="term" value="P:establishment or maintenance of apical/basal cell polarity"/>
    <property type="evidence" value="ECO:0000315"/>
    <property type="project" value="FlyBase"/>
</dbReference>
<dbReference type="GO" id="GO:0045197">
    <property type="term" value="P:establishment or maintenance of epithelial cell apical/basal polarity"/>
    <property type="evidence" value="ECO:0000318"/>
    <property type="project" value="GO_Central"/>
</dbReference>
<dbReference type="GO" id="GO:0016332">
    <property type="term" value="P:establishment or maintenance of polarity of embryonic epithelium"/>
    <property type="evidence" value="ECO:0000304"/>
    <property type="project" value="FlyBase"/>
</dbReference>
<dbReference type="GO" id="GO:0016334">
    <property type="term" value="P:establishment or maintenance of polarity of follicular epithelium"/>
    <property type="evidence" value="ECO:0000315"/>
    <property type="project" value="FlyBase"/>
</dbReference>
<dbReference type="GO" id="GO:0016336">
    <property type="term" value="P:establishment or maintenance of polarity of larval imaginal disc epithelium"/>
    <property type="evidence" value="ECO:0000315"/>
    <property type="project" value="FlyBase"/>
</dbReference>
<dbReference type="GO" id="GO:0030707">
    <property type="term" value="P:follicle cell of egg chamber development"/>
    <property type="evidence" value="ECO:0000315"/>
    <property type="project" value="BHF-UCL"/>
</dbReference>
<dbReference type="GO" id="GO:0072002">
    <property type="term" value="P:Malpighian tubule development"/>
    <property type="evidence" value="ECO:0000315"/>
    <property type="project" value="FlyBase"/>
</dbReference>
<dbReference type="GO" id="GO:0007613">
    <property type="term" value="P:memory"/>
    <property type="evidence" value="ECO:0000315"/>
    <property type="project" value="FlyBase"/>
</dbReference>
<dbReference type="GO" id="GO:0001738">
    <property type="term" value="P:morphogenesis of a polarized epithelium"/>
    <property type="evidence" value="ECO:0000304"/>
    <property type="project" value="FlyBase"/>
</dbReference>
<dbReference type="GO" id="GO:0016331">
    <property type="term" value="P:morphogenesis of embryonic epithelium"/>
    <property type="evidence" value="ECO:0000304"/>
    <property type="project" value="FlyBase"/>
</dbReference>
<dbReference type="GO" id="GO:0016333">
    <property type="term" value="P:morphogenesis of follicular epithelium"/>
    <property type="evidence" value="ECO:0000315"/>
    <property type="project" value="FlyBase"/>
</dbReference>
<dbReference type="GO" id="GO:0016335">
    <property type="term" value="P:morphogenesis of larval imaginal disc epithelium"/>
    <property type="evidence" value="ECO:0000315"/>
    <property type="project" value="FlyBase"/>
</dbReference>
<dbReference type="GO" id="GO:0008285">
    <property type="term" value="P:negative regulation of cell population proliferation"/>
    <property type="evidence" value="ECO:0000315"/>
    <property type="project" value="FlyBase"/>
</dbReference>
<dbReference type="GO" id="GO:0050680">
    <property type="term" value="P:negative regulation of epithelial cell proliferation"/>
    <property type="evidence" value="ECO:0000315"/>
    <property type="project" value="FlyBase"/>
</dbReference>
<dbReference type="GO" id="GO:0045571">
    <property type="term" value="P:negative regulation of imaginal disc growth"/>
    <property type="evidence" value="ECO:0000315"/>
    <property type="project" value="FlyBase"/>
</dbReference>
<dbReference type="GO" id="GO:0098887">
    <property type="term" value="P:neurotransmitter receptor transport, endosome to postsynaptic membrane"/>
    <property type="evidence" value="ECO:0000318"/>
    <property type="project" value="GO_Central"/>
</dbReference>
<dbReference type="GO" id="GO:0042048">
    <property type="term" value="P:olfactory behavior"/>
    <property type="evidence" value="ECO:0000315"/>
    <property type="project" value="FlyBase"/>
</dbReference>
<dbReference type="GO" id="GO:0007318">
    <property type="term" value="P:pole plasm protein localization"/>
    <property type="evidence" value="ECO:0000315"/>
    <property type="project" value="BHF-UCL"/>
</dbReference>
<dbReference type="GO" id="GO:0007464">
    <property type="term" value="P:R3/R4 cell fate commitment"/>
    <property type="evidence" value="ECO:0000315"/>
    <property type="project" value="FlyBase"/>
</dbReference>
<dbReference type="GO" id="GO:0043113">
    <property type="term" value="P:receptor clustering"/>
    <property type="evidence" value="ECO:0000318"/>
    <property type="project" value="GO_Central"/>
</dbReference>
<dbReference type="GO" id="GO:0030100">
    <property type="term" value="P:regulation of endocytosis"/>
    <property type="evidence" value="ECO:0000315"/>
    <property type="project" value="FlyBase"/>
</dbReference>
<dbReference type="GO" id="GO:0050803">
    <property type="term" value="P:regulation of synapse structure or activity"/>
    <property type="evidence" value="ECO:0000315"/>
    <property type="project" value="FlyBase"/>
</dbReference>
<dbReference type="GO" id="GO:0007608">
    <property type="term" value="P:sensory perception of smell"/>
    <property type="evidence" value="ECO:0007669"/>
    <property type="project" value="UniProtKB-KW"/>
</dbReference>
<dbReference type="GO" id="GO:0019991">
    <property type="term" value="P:septate junction assembly"/>
    <property type="evidence" value="ECO:0000315"/>
    <property type="project" value="FlyBase"/>
</dbReference>
<dbReference type="GO" id="GO:0048863">
    <property type="term" value="P:stem cell differentiation"/>
    <property type="evidence" value="ECO:0000315"/>
    <property type="project" value="FlyBase"/>
</dbReference>
<dbReference type="GO" id="GO:0072089">
    <property type="term" value="P:stem cell proliferation"/>
    <property type="evidence" value="ECO:0000315"/>
    <property type="project" value="FlyBase"/>
</dbReference>
<dbReference type="GO" id="GO:0007472">
    <property type="term" value="P:wing disc morphogenesis"/>
    <property type="evidence" value="ECO:0000315"/>
    <property type="project" value="FlyBase"/>
</dbReference>
<dbReference type="GO" id="GO:0045186">
    <property type="term" value="P:zonula adherens assembly"/>
    <property type="evidence" value="ECO:0000315"/>
    <property type="project" value="FlyBase"/>
</dbReference>
<dbReference type="CDD" id="cd06704">
    <property type="entry name" value="PDZ1_Scribble-like"/>
    <property type="match status" value="1"/>
</dbReference>
<dbReference type="CDD" id="cd06703">
    <property type="entry name" value="PDZ2_Scribble-like"/>
    <property type="match status" value="1"/>
</dbReference>
<dbReference type="CDD" id="cd06702">
    <property type="entry name" value="PDZ3_Scribble-like"/>
    <property type="match status" value="1"/>
</dbReference>
<dbReference type="CDD" id="cd06701">
    <property type="entry name" value="PDZ4_Scribble-like"/>
    <property type="match status" value="1"/>
</dbReference>
<dbReference type="FunFam" id="3.80.10.10:FF:000599">
    <property type="entry name" value="Leucine-rich repeat-containing protein"/>
    <property type="match status" value="1"/>
</dbReference>
<dbReference type="FunFam" id="2.30.42.10:FF:000064">
    <property type="entry name" value="protein lap4 isoform X1"/>
    <property type="match status" value="1"/>
</dbReference>
<dbReference type="FunFam" id="3.80.10.10:FF:000076">
    <property type="entry name" value="protein lap4 isoform X23"/>
    <property type="match status" value="1"/>
</dbReference>
<dbReference type="FunFam" id="2.30.42.10:FF:000041">
    <property type="entry name" value="protein scribble homolog isoform X1"/>
    <property type="match status" value="1"/>
</dbReference>
<dbReference type="FunFam" id="3.80.10.10:FF:000036">
    <property type="entry name" value="protein scribble homolog isoform X1"/>
    <property type="match status" value="1"/>
</dbReference>
<dbReference type="FunFam" id="2.30.42.10:FF:000074">
    <property type="entry name" value="protein scribble homolog isoform X2"/>
    <property type="match status" value="1"/>
</dbReference>
<dbReference type="FunFam" id="2.30.42.10:FF:000153">
    <property type="entry name" value="Scribbled, isoform T"/>
    <property type="match status" value="1"/>
</dbReference>
<dbReference type="Gene3D" id="2.30.42.10">
    <property type="match status" value="4"/>
</dbReference>
<dbReference type="Gene3D" id="3.80.10.10">
    <property type="entry name" value="Ribonuclease Inhibitor"/>
    <property type="match status" value="4"/>
</dbReference>
<dbReference type="InterPro" id="IPR001611">
    <property type="entry name" value="Leu-rich_rpt"/>
</dbReference>
<dbReference type="InterPro" id="IPR003591">
    <property type="entry name" value="Leu-rich_rpt_typical-subtyp"/>
</dbReference>
<dbReference type="InterPro" id="IPR032675">
    <property type="entry name" value="LRR_dom_sf"/>
</dbReference>
<dbReference type="InterPro" id="IPR055414">
    <property type="entry name" value="LRR_R13L4/SHOC2-like"/>
</dbReference>
<dbReference type="InterPro" id="IPR001478">
    <property type="entry name" value="PDZ"/>
</dbReference>
<dbReference type="InterPro" id="IPR036034">
    <property type="entry name" value="PDZ_sf"/>
</dbReference>
<dbReference type="InterPro" id="IPR050614">
    <property type="entry name" value="Synaptic_Scaffolding_LAP-MAGUK"/>
</dbReference>
<dbReference type="PANTHER" id="PTHR23119">
    <property type="entry name" value="DISCS LARGE"/>
    <property type="match status" value="1"/>
</dbReference>
<dbReference type="PANTHER" id="PTHR23119:SF44">
    <property type="entry name" value="PROTEIN LAP4"/>
    <property type="match status" value="1"/>
</dbReference>
<dbReference type="Pfam" id="PF23598">
    <property type="entry name" value="LRR_14"/>
    <property type="match status" value="1"/>
</dbReference>
<dbReference type="Pfam" id="PF13855">
    <property type="entry name" value="LRR_8"/>
    <property type="match status" value="2"/>
</dbReference>
<dbReference type="Pfam" id="PF00595">
    <property type="entry name" value="PDZ"/>
    <property type="match status" value="4"/>
</dbReference>
<dbReference type="SMART" id="SM00364">
    <property type="entry name" value="LRR_BAC"/>
    <property type="match status" value="9"/>
</dbReference>
<dbReference type="SMART" id="SM00365">
    <property type="entry name" value="LRR_SD22"/>
    <property type="match status" value="6"/>
</dbReference>
<dbReference type="SMART" id="SM00369">
    <property type="entry name" value="LRR_TYP"/>
    <property type="match status" value="13"/>
</dbReference>
<dbReference type="SMART" id="SM00228">
    <property type="entry name" value="PDZ"/>
    <property type="match status" value="4"/>
</dbReference>
<dbReference type="SUPFAM" id="SSF52058">
    <property type="entry name" value="L domain-like"/>
    <property type="match status" value="2"/>
</dbReference>
<dbReference type="SUPFAM" id="SSF50156">
    <property type="entry name" value="PDZ domain-like"/>
    <property type="match status" value="4"/>
</dbReference>
<dbReference type="PROSITE" id="PS51450">
    <property type="entry name" value="LRR"/>
    <property type="match status" value="15"/>
</dbReference>
<dbReference type="PROSITE" id="PS50106">
    <property type="entry name" value="PDZ"/>
    <property type="match status" value="4"/>
</dbReference>